<sequence>MDEQEIQRLVEEVSLQYFGMPFLHKAMFNSRLRTTGGRYLLNTHNIELNYRYYEMYGKEELVGIVKHELCHYHLHITGRGYKHRDKDFRELLKAVDAPRFCKRMVNAEKEKRVYVYECMECLLQYVRRRQINTKRYVCGKCKGKLNLIKKTS</sequence>
<dbReference type="EMBL" id="AE016879">
    <property type="protein sequence ID" value="AAP24296.1"/>
    <property type="molecule type" value="Genomic_DNA"/>
</dbReference>
<dbReference type="EMBL" id="AE017334">
    <property type="protein sequence ID" value="AAT29338.1"/>
    <property type="molecule type" value="Genomic_DNA"/>
</dbReference>
<dbReference type="EMBL" id="AE017225">
    <property type="protein sequence ID" value="AAT52578.1"/>
    <property type="molecule type" value="Genomic_DNA"/>
</dbReference>
<dbReference type="RefSeq" id="NP_842810.1">
    <property type="nucleotide sequence ID" value="NC_003997.3"/>
</dbReference>
<dbReference type="RefSeq" id="WP_000344248.1">
    <property type="nucleotide sequence ID" value="NZ_WXXJ01000025.1"/>
</dbReference>
<dbReference type="RefSeq" id="YP_026527.1">
    <property type="nucleotide sequence ID" value="NC_005945.1"/>
</dbReference>
<dbReference type="STRING" id="261594.GBAA_0257"/>
<dbReference type="DNASU" id="1086488"/>
<dbReference type="GeneID" id="45020295"/>
<dbReference type="KEGG" id="ban:BA_0257"/>
<dbReference type="KEGG" id="bar:GBAA_0257"/>
<dbReference type="KEGG" id="bat:BAS0242"/>
<dbReference type="PATRIC" id="fig|198094.11.peg.250"/>
<dbReference type="eggNOG" id="COG3091">
    <property type="taxonomic scope" value="Bacteria"/>
</dbReference>
<dbReference type="HOGENOM" id="CLU_123820_0_0_9"/>
<dbReference type="OMA" id="LVHYHLH"/>
<dbReference type="OrthoDB" id="9799909at2"/>
<dbReference type="Proteomes" id="UP000000427">
    <property type="component" value="Chromosome"/>
</dbReference>
<dbReference type="Proteomes" id="UP000000594">
    <property type="component" value="Chromosome"/>
</dbReference>
<dbReference type="GO" id="GO:0005737">
    <property type="term" value="C:cytoplasm"/>
    <property type="evidence" value="ECO:0007669"/>
    <property type="project" value="UniProtKB-SubCell"/>
</dbReference>
<dbReference type="GO" id="GO:0008270">
    <property type="term" value="F:zinc ion binding"/>
    <property type="evidence" value="ECO:0007669"/>
    <property type="project" value="UniProtKB-UniRule"/>
</dbReference>
<dbReference type="GO" id="GO:0006950">
    <property type="term" value="P:response to stress"/>
    <property type="evidence" value="ECO:0007669"/>
    <property type="project" value="UniProtKB-ARBA"/>
</dbReference>
<dbReference type="HAMAP" id="MF_00745">
    <property type="entry name" value="SprT_like"/>
    <property type="match status" value="1"/>
</dbReference>
<dbReference type="InterPro" id="IPR006640">
    <property type="entry name" value="SprT-like_domain"/>
</dbReference>
<dbReference type="InterPro" id="IPR035240">
    <property type="entry name" value="SprT_Zn_ribbon"/>
</dbReference>
<dbReference type="InterPro" id="IPR023524">
    <property type="entry name" value="Uncharacterised_SprT-like"/>
</dbReference>
<dbReference type="NCBIfam" id="NF003339">
    <property type="entry name" value="PRK04351.1"/>
    <property type="match status" value="1"/>
</dbReference>
<dbReference type="Pfam" id="PF10263">
    <property type="entry name" value="SprT-like"/>
    <property type="match status" value="1"/>
</dbReference>
<dbReference type="Pfam" id="PF17283">
    <property type="entry name" value="Zn_ribbon_SprT"/>
    <property type="match status" value="1"/>
</dbReference>
<dbReference type="SMART" id="SM00731">
    <property type="entry name" value="SprT"/>
    <property type="match status" value="1"/>
</dbReference>
<protein>
    <recommendedName>
        <fullName evidence="1">Protein SprT-like</fullName>
    </recommendedName>
</protein>
<organism>
    <name type="scientific">Bacillus anthracis</name>
    <dbReference type="NCBI Taxonomy" id="1392"/>
    <lineage>
        <taxon>Bacteria</taxon>
        <taxon>Bacillati</taxon>
        <taxon>Bacillota</taxon>
        <taxon>Bacilli</taxon>
        <taxon>Bacillales</taxon>
        <taxon>Bacillaceae</taxon>
        <taxon>Bacillus</taxon>
        <taxon>Bacillus cereus group</taxon>
    </lineage>
</organism>
<accession>Q81VF1</accession>
<accession>Q6I4F3</accession>
<accession>Q6KY54</accession>
<gene>
    <name type="ordered locus">BA_0257</name>
    <name type="ordered locus">GBAA_0257</name>
    <name type="ordered locus">BAS0242</name>
</gene>
<comment type="cofactor">
    <cofactor evidence="1">
        <name>Zn(2+)</name>
        <dbReference type="ChEBI" id="CHEBI:29105"/>
    </cofactor>
    <text evidence="1">Binds 1 zinc ion.</text>
</comment>
<comment type="subcellular location">
    <subcellularLocation>
        <location evidence="1">Cytoplasm</location>
    </subcellularLocation>
</comment>
<comment type="similarity">
    <text evidence="1">Belongs to the SprT family.</text>
</comment>
<keyword id="KW-0963">Cytoplasm</keyword>
<keyword id="KW-0479">Metal-binding</keyword>
<keyword id="KW-1185">Reference proteome</keyword>
<keyword id="KW-0862">Zinc</keyword>
<feature type="chain" id="PRO_0000213285" description="Protein SprT-like">
    <location>
        <begin position="1"/>
        <end position="152"/>
    </location>
</feature>
<feature type="domain" description="SprT-like" evidence="1">
    <location>
        <begin position="7"/>
        <end position="148"/>
    </location>
</feature>
<feature type="active site" evidence="1">
    <location>
        <position position="68"/>
    </location>
</feature>
<feature type="binding site" evidence="1">
    <location>
        <position position="67"/>
    </location>
    <ligand>
        <name>Zn(2+)</name>
        <dbReference type="ChEBI" id="CHEBI:29105"/>
    </ligand>
</feature>
<feature type="binding site" evidence="1">
    <location>
        <position position="71"/>
    </location>
    <ligand>
        <name>Zn(2+)</name>
        <dbReference type="ChEBI" id="CHEBI:29105"/>
    </ligand>
</feature>
<evidence type="ECO:0000255" key="1">
    <source>
        <dbReference type="HAMAP-Rule" id="MF_00745"/>
    </source>
</evidence>
<reference key="1">
    <citation type="journal article" date="2003" name="Nature">
        <title>The genome sequence of Bacillus anthracis Ames and comparison to closely related bacteria.</title>
        <authorList>
            <person name="Read T.D."/>
            <person name="Peterson S.N."/>
            <person name="Tourasse N.J."/>
            <person name="Baillie L.W."/>
            <person name="Paulsen I.T."/>
            <person name="Nelson K.E."/>
            <person name="Tettelin H."/>
            <person name="Fouts D.E."/>
            <person name="Eisen J.A."/>
            <person name="Gill S.R."/>
            <person name="Holtzapple E.K."/>
            <person name="Okstad O.A."/>
            <person name="Helgason E."/>
            <person name="Rilstone J."/>
            <person name="Wu M."/>
            <person name="Kolonay J.F."/>
            <person name="Beanan M.J."/>
            <person name="Dodson R.J."/>
            <person name="Brinkac L.M."/>
            <person name="Gwinn M.L."/>
            <person name="DeBoy R.T."/>
            <person name="Madpu R."/>
            <person name="Daugherty S.C."/>
            <person name="Durkin A.S."/>
            <person name="Haft D.H."/>
            <person name="Nelson W.C."/>
            <person name="Peterson J.D."/>
            <person name="Pop M."/>
            <person name="Khouri H.M."/>
            <person name="Radune D."/>
            <person name="Benton J.L."/>
            <person name="Mahamoud Y."/>
            <person name="Jiang L."/>
            <person name="Hance I.R."/>
            <person name="Weidman J.F."/>
            <person name="Berry K.J."/>
            <person name="Plaut R.D."/>
            <person name="Wolf A.M."/>
            <person name="Watkins K.L."/>
            <person name="Nierman W.C."/>
            <person name="Hazen A."/>
            <person name="Cline R.T."/>
            <person name="Redmond C."/>
            <person name="Thwaite J.E."/>
            <person name="White O."/>
            <person name="Salzberg S.L."/>
            <person name="Thomason B."/>
            <person name="Friedlander A.M."/>
            <person name="Koehler T.M."/>
            <person name="Hanna P.C."/>
            <person name="Kolstoe A.-B."/>
            <person name="Fraser C.M."/>
        </authorList>
    </citation>
    <scope>NUCLEOTIDE SEQUENCE [LARGE SCALE GENOMIC DNA]</scope>
    <source>
        <strain>Ames / isolate Porton</strain>
    </source>
</reference>
<reference key="2">
    <citation type="journal article" date="2009" name="J. Bacteriol.">
        <title>The complete genome sequence of Bacillus anthracis Ames 'Ancestor'.</title>
        <authorList>
            <person name="Ravel J."/>
            <person name="Jiang L."/>
            <person name="Stanley S.T."/>
            <person name="Wilson M.R."/>
            <person name="Decker R.S."/>
            <person name="Read T.D."/>
            <person name="Worsham P."/>
            <person name="Keim P.S."/>
            <person name="Salzberg S.L."/>
            <person name="Fraser-Liggett C.M."/>
            <person name="Rasko D.A."/>
        </authorList>
    </citation>
    <scope>NUCLEOTIDE SEQUENCE [LARGE SCALE GENOMIC DNA]</scope>
    <source>
        <strain>Ames ancestor</strain>
    </source>
</reference>
<reference key="3">
    <citation type="submission" date="2004-01" db="EMBL/GenBank/DDBJ databases">
        <title>Complete genome sequence of Bacillus anthracis Sterne.</title>
        <authorList>
            <person name="Brettin T.S."/>
            <person name="Bruce D."/>
            <person name="Challacombe J.F."/>
            <person name="Gilna P."/>
            <person name="Han C."/>
            <person name="Hill K."/>
            <person name="Hitchcock P."/>
            <person name="Jackson P."/>
            <person name="Keim P."/>
            <person name="Longmire J."/>
            <person name="Lucas S."/>
            <person name="Okinaka R."/>
            <person name="Richardson P."/>
            <person name="Rubin E."/>
            <person name="Tice H."/>
        </authorList>
    </citation>
    <scope>NUCLEOTIDE SEQUENCE [LARGE SCALE GENOMIC DNA]</scope>
    <source>
        <strain>Sterne</strain>
    </source>
</reference>
<name>SPRTL_BACAN</name>
<proteinExistence type="inferred from homology"/>